<accession>A9MDX1</accession>
<sequence length="341" mass="36782">MASEAPPFWWDEPDWRALALAPAAWIYGRVSGRRLIRAVPPRVSLPVLCVGNFTVGGAGKTPTAIAFARGAIARGMKPGIVSRGYGGNYSGLHLVDPGHDGARHVGDEPLLLARHAAVALSPDRVKAAEYLKSLGCDFIIMDDGFQSARLHADFSLLVVDASRGIGNGRVIPAGPLRAPLTDQMRKTDALLCIGKGNGADFVIRQAARAGRPIYHAQLRPSSSATVAGRRWLAFAGIGNPDKFYESVRQAGGEVVETHSFADHYSFEPDDIRGLVDMARRQGLGLITTAKDHVRLATMPGVPPEFLSKLAVLDVDLEFDRTDALDHILDTVVERFKSRLHG</sequence>
<gene>
    <name evidence="1" type="primary">lpxK</name>
    <name type="ordered locus">BCAN_B0217</name>
</gene>
<reference key="1">
    <citation type="submission" date="2007-10" db="EMBL/GenBank/DDBJ databases">
        <title>Brucella canis ATCC 23365 whole genome shotgun sequencing project.</title>
        <authorList>
            <person name="Setubal J.C."/>
            <person name="Bowns C."/>
            <person name="Boyle S."/>
            <person name="Crasta O.R."/>
            <person name="Czar M.J."/>
            <person name="Dharmanolla C."/>
            <person name="Gillespie J.J."/>
            <person name="Kenyon R.W."/>
            <person name="Lu J."/>
            <person name="Mane S."/>
            <person name="Mohapatra S."/>
            <person name="Nagrani S."/>
            <person name="Purkayastha A."/>
            <person name="Rajasimha H.K."/>
            <person name="Shallom J.M."/>
            <person name="Shallom S."/>
            <person name="Shukla M."/>
            <person name="Snyder E.E."/>
            <person name="Sobral B.W."/>
            <person name="Wattam A.R."/>
            <person name="Will R."/>
            <person name="Williams K."/>
            <person name="Yoo H."/>
            <person name="Bruce D."/>
            <person name="Detter C."/>
            <person name="Munk C."/>
            <person name="Brettin T.S."/>
        </authorList>
    </citation>
    <scope>NUCLEOTIDE SEQUENCE [LARGE SCALE GENOMIC DNA]</scope>
    <source>
        <strain>ATCC 23365 / NCTC 10854 / RM-666</strain>
    </source>
</reference>
<evidence type="ECO:0000255" key="1">
    <source>
        <dbReference type="HAMAP-Rule" id="MF_00409"/>
    </source>
</evidence>
<feature type="chain" id="PRO_1000080461" description="Tetraacyldisaccharide 4'-kinase">
    <location>
        <begin position="1"/>
        <end position="341"/>
    </location>
</feature>
<feature type="binding site" evidence="1">
    <location>
        <begin position="54"/>
        <end position="61"/>
    </location>
    <ligand>
        <name>ATP</name>
        <dbReference type="ChEBI" id="CHEBI:30616"/>
    </ligand>
</feature>
<protein>
    <recommendedName>
        <fullName evidence="1">Tetraacyldisaccharide 4'-kinase</fullName>
        <ecNumber evidence="1">2.7.1.130</ecNumber>
    </recommendedName>
    <alternativeName>
        <fullName evidence="1">Lipid A 4'-kinase</fullName>
    </alternativeName>
</protein>
<comment type="function">
    <text evidence="1">Transfers the gamma-phosphate of ATP to the 4'-position of a tetraacyldisaccharide 1-phosphate intermediate (termed DS-1-P) to form tetraacyldisaccharide 1,4'-bis-phosphate (lipid IVA).</text>
</comment>
<comment type="catalytic activity">
    <reaction evidence="1">
        <text>a lipid A disaccharide + ATP = a lipid IVA + ADP + H(+)</text>
        <dbReference type="Rhea" id="RHEA:67840"/>
        <dbReference type="ChEBI" id="CHEBI:15378"/>
        <dbReference type="ChEBI" id="CHEBI:30616"/>
        <dbReference type="ChEBI" id="CHEBI:176343"/>
        <dbReference type="ChEBI" id="CHEBI:176425"/>
        <dbReference type="ChEBI" id="CHEBI:456216"/>
        <dbReference type="EC" id="2.7.1.130"/>
    </reaction>
</comment>
<comment type="pathway">
    <text evidence="1">Glycolipid biosynthesis; lipid IV(A) biosynthesis; lipid IV(A) from (3R)-3-hydroxytetradecanoyl-[acyl-carrier-protein] and UDP-N-acetyl-alpha-D-glucosamine: step 6/6.</text>
</comment>
<comment type="similarity">
    <text evidence="1">Belongs to the LpxK family.</text>
</comment>
<keyword id="KW-0067">ATP-binding</keyword>
<keyword id="KW-0418">Kinase</keyword>
<keyword id="KW-0441">Lipid A biosynthesis</keyword>
<keyword id="KW-0444">Lipid biosynthesis</keyword>
<keyword id="KW-0443">Lipid metabolism</keyword>
<keyword id="KW-0547">Nucleotide-binding</keyword>
<keyword id="KW-1185">Reference proteome</keyword>
<keyword id="KW-0808">Transferase</keyword>
<proteinExistence type="inferred from homology"/>
<name>LPXK_BRUC2</name>
<dbReference type="EC" id="2.7.1.130" evidence="1"/>
<dbReference type="EMBL" id="CP000873">
    <property type="protein sequence ID" value="ABX63409.1"/>
    <property type="molecule type" value="Genomic_DNA"/>
</dbReference>
<dbReference type="RefSeq" id="WP_002966366.1">
    <property type="nucleotide sequence ID" value="NC_010104.1"/>
</dbReference>
<dbReference type="SMR" id="A9MDX1"/>
<dbReference type="GeneID" id="97535597"/>
<dbReference type="KEGG" id="bcs:BCAN_B0217"/>
<dbReference type="HOGENOM" id="CLU_038816_0_0_5"/>
<dbReference type="PhylomeDB" id="A9MDX1"/>
<dbReference type="UniPathway" id="UPA00359">
    <property type="reaction ID" value="UER00482"/>
</dbReference>
<dbReference type="Proteomes" id="UP000001385">
    <property type="component" value="Chromosome II"/>
</dbReference>
<dbReference type="GO" id="GO:0005886">
    <property type="term" value="C:plasma membrane"/>
    <property type="evidence" value="ECO:0007669"/>
    <property type="project" value="TreeGrafter"/>
</dbReference>
<dbReference type="GO" id="GO:0005524">
    <property type="term" value="F:ATP binding"/>
    <property type="evidence" value="ECO:0007669"/>
    <property type="project" value="UniProtKB-UniRule"/>
</dbReference>
<dbReference type="GO" id="GO:0009029">
    <property type="term" value="F:tetraacyldisaccharide 4'-kinase activity"/>
    <property type="evidence" value="ECO:0007669"/>
    <property type="project" value="UniProtKB-UniRule"/>
</dbReference>
<dbReference type="GO" id="GO:0009245">
    <property type="term" value="P:lipid A biosynthetic process"/>
    <property type="evidence" value="ECO:0007669"/>
    <property type="project" value="UniProtKB-UniRule"/>
</dbReference>
<dbReference type="GO" id="GO:0009244">
    <property type="term" value="P:lipopolysaccharide core region biosynthetic process"/>
    <property type="evidence" value="ECO:0007669"/>
    <property type="project" value="TreeGrafter"/>
</dbReference>
<dbReference type="HAMAP" id="MF_00409">
    <property type="entry name" value="LpxK"/>
    <property type="match status" value="1"/>
</dbReference>
<dbReference type="InterPro" id="IPR003758">
    <property type="entry name" value="LpxK"/>
</dbReference>
<dbReference type="InterPro" id="IPR027417">
    <property type="entry name" value="P-loop_NTPase"/>
</dbReference>
<dbReference type="NCBIfam" id="TIGR00682">
    <property type="entry name" value="lpxK"/>
    <property type="match status" value="1"/>
</dbReference>
<dbReference type="PANTHER" id="PTHR42724">
    <property type="entry name" value="TETRAACYLDISACCHARIDE 4'-KINASE"/>
    <property type="match status" value="1"/>
</dbReference>
<dbReference type="PANTHER" id="PTHR42724:SF1">
    <property type="entry name" value="TETRAACYLDISACCHARIDE 4'-KINASE, MITOCHONDRIAL-RELATED"/>
    <property type="match status" value="1"/>
</dbReference>
<dbReference type="Pfam" id="PF02606">
    <property type="entry name" value="LpxK"/>
    <property type="match status" value="1"/>
</dbReference>
<dbReference type="SUPFAM" id="SSF52540">
    <property type="entry name" value="P-loop containing nucleoside triphosphate hydrolases"/>
    <property type="match status" value="1"/>
</dbReference>
<organism>
    <name type="scientific">Brucella canis (strain ATCC 23365 / NCTC 10854 / RM-666)</name>
    <dbReference type="NCBI Taxonomy" id="483179"/>
    <lineage>
        <taxon>Bacteria</taxon>
        <taxon>Pseudomonadati</taxon>
        <taxon>Pseudomonadota</taxon>
        <taxon>Alphaproteobacteria</taxon>
        <taxon>Hyphomicrobiales</taxon>
        <taxon>Brucellaceae</taxon>
        <taxon>Brucella/Ochrobactrum group</taxon>
        <taxon>Brucella</taxon>
    </lineage>
</organism>